<keyword id="KW-0678">Repressor</keyword>
<keyword id="KW-0687">Ribonucleoprotein</keyword>
<keyword id="KW-0689">Ribosomal protein</keyword>
<keyword id="KW-0694">RNA-binding</keyword>
<keyword id="KW-0699">rRNA-binding</keyword>
<keyword id="KW-0810">Translation regulation</keyword>
<keyword id="KW-0820">tRNA-binding</keyword>
<sequence length="232" mass="24968">MSKLTKKQKLAFSKIEPGKAYTISEASALVKEITTTNFDASVDIDVRLGVDPRKANQMVRGVVTLPHGTGKQIRVLALCSPDKEAEAKEAGADYVGLDEYIEKIKAGWTDIDVIITMPAIMGKIGALGRVLGPRGLMPNPKSGTVTNDVGAAVKEVKAGKIDFKVDKTGIVHTSIGKVSFSADQIRDNAREFINTIIKLKPTTAKGTYIKSIYLSSTMSFGIKVDPKTVDEN</sequence>
<protein>
    <recommendedName>
        <fullName evidence="1">Large ribosomal subunit protein uL1</fullName>
    </recommendedName>
    <alternativeName>
        <fullName evidence="2">50S ribosomal protein L1</fullName>
    </alternativeName>
</protein>
<gene>
    <name evidence="1" type="primary">rplA</name>
    <name type="ordered locus">PGN_1574</name>
</gene>
<proteinExistence type="inferred from homology"/>
<dbReference type="EMBL" id="AP009380">
    <property type="protein sequence ID" value="BAG34093.1"/>
    <property type="molecule type" value="Genomic_DNA"/>
</dbReference>
<dbReference type="RefSeq" id="WP_004584918.1">
    <property type="nucleotide sequence ID" value="NZ_CP025930.1"/>
</dbReference>
<dbReference type="SMR" id="B2RL48"/>
<dbReference type="GeneID" id="29256748"/>
<dbReference type="KEGG" id="pgn:PGN_1574"/>
<dbReference type="eggNOG" id="COG0081">
    <property type="taxonomic scope" value="Bacteria"/>
</dbReference>
<dbReference type="HOGENOM" id="CLU_062853_0_0_10"/>
<dbReference type="OrthoDB" id="9803740at2"/>
<dbReference type="BioCyc" id="PGIN431947:G1G2V-1774-MONOMER"/>
<dbReference type="Proteomes" id="UP000008842">
    <property type="component" value="Chromosome"/>
</dbReference>
<dbReference type="GO" id="GO:0015934">
    <property type="term" value="C:large ribosomal subunit"/>
    <property type="evidence" value="ECO:0007669"/>
    <property type="project" value="InterPro"/>
</dbReference>
<dbReference type="GO" id="GO:0019843">
    <property type="term" value="F:rRNA binding"/>
    <property type="evidence" value="ECO:0007669"/>
    <property type="project" value="UniProtKB-UniRule"/>
</dbReference>
<dbReference type="GO" id="GO:0003735">
    <property type="term" value="F:structural constituent of ribosome"/>
    <property type="evidence" value="ECO:0007669"/>
    <property type="project" value="InterPro"/>
</dbReference>
<dbReference type="GO" id="GO:0000049">
    <property type="term" value="F:tRNA binding"/>
    <property type="evidence" value="ECO:0007669"/>
    <property type="project" value="UniProtKB-KW"/>
</dbReference>
<dbReference type="GO" id="GO:0006417">
    <property type="term" value="P:regulation of translation"/>
    <property type="evidence" value="ECO:0007669"/>
    <property type="project" value="UniProtKB-KW"/>
</dbReference>
<dbReference type="GO" id="GO:0006412">
    <property type="term" value="P:translation"/>
    <property type="evidence" value="ECO:0007669"/>
    <property type="project" value="UniProtKB-UniRule"/>
</dbReference>
<dbReference type="CDD" id="cd00403">
    <property type="entry name" value="Ribosomal_L1"/>
    <property type="match status" value="1"/>
</dbReference>
<dbReference type="FunFam" id="3.40.50.790:FF:000001">
    <property type="entry name" value="50S ribosomal protein L1"/>
    <property type="match status" value="1"/>
</dbReference>
<dbReference type="Gene3D" id="3.30.190.20">
    <property type="match status" value="1"/>
</dbReference>
<dbReference type="Gene3D" id="3.40.50.790">
    <property type="match status" value="1"/>
</dbReference>
<dbReference type="HAMAP" id="MF_01318_B">
    <property type="entry name" value="Ribosomal_uL1_B"/>
    <property type="match status" value="1"/>
</dbReference>
<dbReference type="InterPro" id="IPR005878">
    <property type="entry name" value="Ribosom_uL1_bac-type"/>
</dbReference>
<dbReference type="InterPro" id="IPR002143">
    <property type="entry name" value="Ribosomal_uL1"/>
</dbReference>
<dbReference type="InterPro" id="IPR023674">
    <property type="entry name" value="Ribosomal_uL1-like"/>
</dbReference>
<dbReference type="InterPro" id="IPR028364">
    <property type="entry name" value="Ribosomal_uL1/biogenesis"/>
</dbReference>
<dbReference type="InterPro" id="IPR016095">
    <property type="entry name" value="Ribosomal_uL1_3-a/b-sand"/>
</dbReference>
<dbReference type="InterPro" id="IPR023673">
    <property type="entry name" value="Ribosomal_uL1_CS"/>
</dbReference>
<dbReference type="NCBIfam" id="TIGR01169">
    <property type="entry name" value="rplA_bact"/>
    <property type="match status" value="1"/>
</dbReference>
<dbReference type="PANTHER" id="PTHR36427">
    <property type="entry name" value="54S RIBOSOMAL PROTEIN L1, MITOCHONDRIAL"/>
    <property type="match status" value="1"/>
</dbReference>
<dbReference type="PANTHER" id="PTHR36427:SF3">
    <property type="entry name" value="LARGE RIBOSOMAL SUBUNIT PROTEIN UL1M"/>
    <property type="match status" value="1"/>
</dbReference>
<dbReference type="Pfam" id="PF00687">
    <property type="entry name" value="Ribosomal_L1"/>
    <property type="match status" value="1"/>
</dbReference>
<dbReference type="PIRSF" id="PIRSF002155">
    <property type="entry name" value="Ribosomal_L1"/>
    <property type="match status" value="1"/>
</dbReference>
<dbReference type="SUPFAM" id="SSF56808">
    <property type="entry name" value="Ribosomal protein L1"/>
    <property type="match status" value="1"/>
</dbReference>
<dbReference type="PROSITE" id="PS01199">
    <property type="entry name" value="RIBOSOMAL_L1"/>
    <property type="match status" value="1"/>
</dbReference>
<accession>B2RL48</accession>
<feature type="chain" id="PRO_1000141442" description="Large ribosomal subunit protein uL1">
    <location>
        <begin position="1"/>
        <end position="232"/>
    </location>
</feature>
<reference key="1">
    <citation type="journal article" date="2008" name="DNA Res.">
        <title>Determination of the genome sequence of Porphyromonas gingivalis strain ATCC 33277 and genomic comparison with strain W83 revealed extensive genome rearrangements in P. gingivalis.</title>
        <authorList>
            <person name="Naito M."/>
            <person name="Hirakawa H."/>
            <person name="Yamashita A."/>
            <person name="Ohara N."/>
            <person name="Shoji M."/>
            <person name="Yukitake H."/>
            <person name="Nakayama K."/>
            <person name="Toh H."/>
            <person name="Yoshimura F."/>
            <person name="Kuhara S."/>
            <person name="Hattori M."/>
            <person name="Hayashi T."/>
            <person name="Nakayama K."/>
        </authorList>
    </citation>
    <scope>NUCLEOTIDE SEQUENCE [LARGE SCALE GENOMIC DNA]</scope>
    <source>
        <strain>ATCC 33277 / DSM 20709 / CIP 103683 / JCM 12257 / NCTC 11834 / 2561</strain>
    </source>
</reference>
<organism>
    <name type="scientific">Porphyromonas gingivalis (strain ATCC 33277 / DSM 20709 / CIP 103683 / JCM 12257 / NCTC 11834 / 2561)</name>
    <dbReference type="NCBI Taxonomy" id="431947"/>
    <lineage>
        <taxon>Bacteria</taxon>
        <taxon>Pseudomonadati</taxon>
        <taxon>Bacteroidota</taxon>
        <taxon>Bacteroidia</taxon>
        <taxon>Bacteroidales</taxon>
        <taxon>Porphyromonadaceae</taxon>
        <taxon>Porphyromonas</taxon>
    </lineage>
</organism>
<evidence type="ECO:0000255" key="1">
    <source>
        <dbReference type="HAMAP-Rule" id="MF_01318"/>
    </source>
</evidence>
<evidence type="ECO:0000305" key="2"/>
<name>RL1_PORG3</name>
<comment type="function">
    <text evidence="1">Binds directly to 23S rRNA. The L1 stalk is quite mobile in the ribosome, and is involved in E site tRNA release.</text>
</comment>
<comment type="function">
    <text evidence="1">Protein L1 is also a translational repressor protein, it controls the translation of the L11 operon by binding to its mRNA.</text>
</comment>
<comment type="subunit">
    <text evidence="1">Part of the 50S ribosomal subunit.</text>
</comment>
<comment type="similarity">
    <text evidence="1">Belongs to the universal ribosomal protein uL1 family.</text>
</comment>